<accession>A0A7S8MU85</accession>
<comment type="function">
    <text evidence="5">Putative sodium channel toxin.</text>
</comment>
<comment type="subcellular location">
    <subcellularLocation>
        <location evidence="5">Secreted</location>
    </subcellularLocation>
</comment>
<comment type="tissue specificity">
    <text evidence="5">Expressed by the venom gland.</text>
</comment>
<comment type="domain">
    <text evidence="4">Has the structural arrangement of an alpha-helix connected to antiparallel beta-sheets by disulfide bonds (CS-alpha/beta).</text>
</comment>
<comment type="similarity">
    <text evidence="4">Belongs to the long (4 C-C) scorpion toxin superfamily. Sodium channel inhibitor family.</text>
</comment>
<reference evidence="6" key="1">
    <citation type="journal article" date="2021" name="Toxicon">
        <title>Novel components of Tityus serrulatus venom: a transcriptomic approach.</title>
        <authorList>
            <person name="Kalapothakis Y."/>
            <person name="Miranda K."/>
            <person name="Pereira A.H."/>
            <person name="Witt A.S.A."/>
            <person name="Marani C."/>
            <person name="Martins A.P."/>
            <person name="Leal H.G."/>
            <person name="Campos-Junior E."/>
            <person name="Pimenta A.M.C."/>
            <person name="Borges A."/>
            <person name="Chavez-Olortegui C."/>
            <person name="Kalapothakis E."/>
        </authorList>
    </citation>
    <scope>NUCLEOTIDE SEQUENCE [MRNA]</scope>
    <source>
        <tissue>Telson</tissue>
    </source>
</reference>
<feature type="signal peptide" evidence="5">
    <location>
        <begin position="1" status="less than"/>
        <end position="22"/>
    </location>
</feature>
<feature type="chain" id="PRO_0000455736" description="Putative sodium channel toxin Ts35">
    <location>
        <begin position="23"/>
        <end position="90"/>
    </location>
</feature>
<feature type="domain" description="LCN-type CS-alpha/beta" evidence="2">
    <location>
        <begin position="23"/>
        <end position="87"/>
    </location>
</feature>
<feature type="disulfide bond" evidence="1">
    <location>
        <begin position="33"/>
        <end position="86"/>
    </location>
</feature>
<feature type="disulfide bond" evidence="1">
    <location>
        <begin position="37"/>
        <end position="61"/>
    </location>
</feature>
<feature type="disulfide bond" evidence="1">
    <location>
        <begin position="46"/>
        <end position="66"/>
    </location>
</feature>
<feature type="disulfide bond" evidence="1">
    <location>
        <begin position="50"/>
        <end position="68"/>
    </location>
</feature>
<feature type="non-terminal residue" evidence="6">
    <location>
        <position position="1"/>
    </location>
</feature>
<sequence>QDEVGLGSCSVIFVVGNEEGEAKDGYAVGGDRCRVRCSPLGKNKDCETACRKKAGSYYGYCYLWFCYCENVSESAVVWGNPTLGPCLSDG</sequence>
<dbReference type="EMBL" id="MT081344">
    <property type="protein sequence ID" value="QPD99026.1"/>
    <property type="molecule type" value="mRNA"/>
</dbReference>
<dbReference type="SMR" id="A0A7S8MU85"/>
<dbReference type="GO" id="GO:0005576">
    <property type="term" value="C:extracellular region"/>
    <property type="evidence" value="ECO:0007669"/>
    <property type="project" value="UniProtKB-SubCell"/>
</dbReference>
<dbReference type="GO" id="GO:0019871">
    <property type="term" value="F:sodium channel inhibitor activity"/>
    <property type="evidence" value="ECO:0007669"/>
    <property type="project" value="InterPro"/>
</dbReference>
<dbReference type="GO" id="GO:0090729">
    <property type="term" value="F:toxin activity"/>
    <property type="evidence" value="ECO:0007669"/>
    <property type="project" value="UniProtKB-KW"/>
</dbReference>
<dbReference type="GO" id="GO:0006952">
    <property type="term" value="P:defense response"/>
    <property type="evidence" value="ECO:0007669"/>
    <property type="project" value="InterPro"/>
</dbReference>
<dbReference type="CDD" id="cd23106">
    <property type="entry name" value="neurotoxins_LC_scorpion"/>
    <property type="match status" value="1"/>
</dbReference>
<dbReference type="Gene3D" id="3.30.30.10">
    <property type="entry name" value="Knottin, scorpion toxin-like"/>
    <property type="match status" value="1"/>
</dbReference>
<dbReference type="InterPro" id="IPR044062">
    <property type="entry name" value="LCN-type_CS_alpha_beta_dom"/>
</dbReference>
<dbReference type="InterPro" id="IPR003614">
    <property type="entry name" value="Scorpion_toxin-like"/>
</dbReference>
<dbReference type="InterPro" id="IPR036574">
    <property type="entry name" value="Scorpion_toxin-like_sf"/>
</dbReference>
<dbReference type="InterPro" id="IPR002061">
    <property type="entry name" value="Scorpion_toxinL/defensin"/>
</dbReference>
<dbReference type="Pfam" id="PF00537">
    <property type="entry name" value="Toxin_3"/>
    <property type="match status" value="1"/>
</dbReference>
<dbReference type="SMART" id="SM00505">
    <property type="entry name" value="Knot1"/>
    <property type="match status" value="1"/>
</dbReference>
<dbReference type="SUPFAM" id="SSF57095">
    <property type="entry name" value="Scorpion toxin-like"/>
    <property type="match status" value="1"/>
</dbReference>
<dbReference type="PROSITE" id="PS51863">
    <property type="entry name" value="LCN_CSAB"/>
    <property type="match status" value="1"/>
</dbReference>
<evidence type="ECO:0000250" key="1">
    <source>
        <dbReference type="UniProtKB" id="P63019"/>
    </source>
</evidence>
<evidence type="ECO:0000255" key="2">
    <source>
        <dbReference type="PROSITE-ProRule" id="PRU01210"/>
    </source>
</evidence>
<evidence type="ECO:0000303" key="3">
    <source>
    </source>
</evidence>
<evidence type="ECO:0000305" key="4"/>
<evidence type="ECO:0000305" key="5">
    <source>
    </source>
</evidence>
<evidence type="ECO:0000312" key="6">
    <source>
        <dbReference type="EMBL" id="QPD99026.1"/>
    </source>
</evidence>
<protein>
    <recommendedName>
        <fullName evidence="3">Putative sodium channel toxin Ts35</fullName>
    </recommendedName>
    <alternativeName>
        <fullName evidence="4">Tityustoxin-35</fullName>
    </alternativeName>
</protein>
<name>SCX35_TITSE</name>
<keyword id="KW-1015">Disulfide bond</keyword>
<keyword id="KW-0872">Ion channel impairing toxin</keyword>
<keyword id="KW-0528">Neurotoxin</keyword>
<keyword id="KW-0964">Secreted</keyword>
<keyword id="KW-0732">Signal</keyword>
<keyword id="KW-0800">Toxin</keyword>
<keyword id="KW-0738">Voltage-gated sodium channel impairing toxin</keyword>
<organism>
    <name type="scientific">Tityus serrulatus</name>
    <name type="common">Brazilian scorpion</name>
    <dbReference type="NCBI Taxonomy" id="6887"/>
    <lineage>
        <taxon>Eukaryota</taxon>
        <taxon>Metazoa</taxon>
        <taxon>Ecdysozoa</taxon>
        <taxon>Arthropoda</taxon>
        <taxon>Chelicerata</taxon>
        <taxon>Arachnida</taxon>
        <taxon>Scorpiones</taxon>
        <taxon>Buthida</taxon>
        <taxon>Buthoidea</taxon>
        <taxon>Buthidae</taxon>
        <taxon>Tityus</taxon>
    </lineage>
</organism>
<proteinExistence type="evidence at transcript level"/>